<protein>
    <recommendedName>
        <fullName evidence="4">dCTP pyrophosphatase 1</fullName>
        <ecNumber evidence="3">3.6.1.12</ecNumber>
    </recommendedName>
    <alternativeName>
        <fullName>Deoxycytidine-triphosphatase 1</fullName>
        <shortName>dCTPase 1</shortName>
    </alternativeName>
    <alternativeName>
        <fullName evidence="6">RS21C6</fullName>
    </alternativeName>
    <alternativeName>
        <fullName evidence="7">XTP3-transactivated gene A protein</fullName>
    </alternativeName>
</protein>
<comment type="function">
    <text evidence="3">Hydrolyzes deoxynucleoside triphosphates (dNTPs) to the corresponding nucleoside monophosphates. Has a strong preference for dCTP and its analogs including 5-iodo-dCTP and 5-methyl-dCTP for which it may even have a higher efficiency. May protect DNA or RNA against the incorporation of these genotoxic nucleotide analogs through their catabolism.</text>
</comment>
<comment type="catalytic activity">
    <reaction evidence="3">
        <text>dCTP + H2O = dCMP + diphosphate + H(+)</text>
        <dbReference type="Rhea" id="RHEA:22636"/>
        <dbReference type="ChEBI" id="CHEBI:15377"/>
        <dbReference type="ChEBI" id="CHEBI:15378"/>
        <dbReference type="ChEBI" id="CHEBI:33019"/>
        <dbReference type="ChEBI" id="CHEBI:57566"/>
        <dbReference type="ChEBI" id="CHEBI:61481"/>
        <dbReference type="EC" id="3.6.1.12"/>
    </reaction>
</comment>
<comment type="cofactor">
    <cofactor evidence="1">
        <name>Mg(2+)</name>
        <dbReference type="ChEBI" id="CHEBI:18420"/>
    </cofactor>
    <text evidence="1">Probably binds two or three Mg(2+) ions per subunit.</text>
</comment>
<comment type="activity regulation">
    <text evidence="3">Inhibited by the reaction end product PPi. Inhibited by dCDP. Inhibited by triptolide.</text>
</comment>
<comment type="biophysicochemical properties">
    <kinetics>
        <KM evidence="3">47.6 uM for dCTP (at pH 8.0 and 25 degrees Celsius)</KM>
        <KM evidence="3">65 uM for dTTP (at pH 8.0 and 25 degrees Celsius)</KM>
        <KM evidence="3">79.3 uM for dATP (at pH 8.0 and 25 degrees Celsius)</KM>
        <KM evidence="3">75.9 uM for dUTP (at pH 8.0 and 25 degrees Celsius)</KM>
        <KM evidence="3">16.8 uM for 5I-dCTP (at pH 8.0 and 25 degrees Celsius)</KM>
        <KM evidence="3">36.5 uM for 5Br-dCTP (at pH 8.0 and 25 degrees Celsius)</KM>
        <KM evidence="3">33.3 uM for 5me-dCTP (at pH 8.0 and 25 degrees Celsius)</KM>
        <KM evidence="3">62.9 uM for 5hme-dCTP (at pH 8.0 and 25 degrees Celsius)</KM>
        <KM evidence="3">9.2 uM for 5fo-dCTP (at pH 8.0 and 25 degrees Celsius)</KM>
        <KM evidence="3">142.9 uM for CTP (at pH 8.0 and 25 degrees Celsius)</KM>
    </kinetics>
</comment>
<comment type="subunit">
    <text evidence="1">Homotetramer.</text>
</comment>
<comment type="interaction">
    <interactant intactId="EBI-723569">
        <id>Q9H773</id>
    </interactant>
    <interactant intactId="EBI-2339778">
        <id>Q8TEP8</id>
        <label>CEP192</label>
    </interactant>
    <organismsDiffer>false</organismsDiffer>
    <experiments>2</experiments>
</comment>
<comment type="interaction">
    <interactant intactId="EBI-723569">
        <id>Q9H773</id>
    </interactant>
    <interactant intactId="EBI-723569">
        <id>Q9H773</id>
        <label>DCTPP1</label>
    </interactant>
    <organismsDiffer>false</organismsDiffer>
    <experiments>6</experiments>
</comment>
<comment type="interaction">
    <interactant intactId="EBI-723569">
        <id>Q9H773</id>
    </interactant>
    <interactant intactId="EBI-742054">
        <id>Q96D03</id>
        <label>DDIT4L</label>
    </interactant>
    <organismsDiffer>false</organismsDiffer>
    <experiments>3</experiments>
</comment>
<comment type="interaction">
    <interactant intactId="EBI-723569">
        <id>Q9H773</id>
    </interactant>
    <interactant intactId="EBI-739832">
        <id>Q8TBB1</id>
        <label>LNX1</label>
    </interactant>
    <organismsDiffer>false</organismsDiffer>
    <experiments>3</experiments>
</comment>
<comment type="interaction">
    <interactant intactId="EBI-723569">
        <id>Q9H773</id>
    </interactant>
    <interactant intactId="EBI-741158">
        <id>Q96HA8</id>
        <label>NTAQ1</label>
    </interactant>
    <organismsDiffer>false</organismsDiffer>
    <experiments>5</experiments>
</comment>
<comment type="interaction">
    <interactant intactId="EBI-723569">
        <id>Q9H773</id>
    </interactant>
    <interactant intactId="EBI-359352">
        <id>P25786</id>
        <label>PSMA1</label>
    </interactant>
    <organismsDiffer>false</organismsDiffer>
    <experiments>3</experiments>
</comment>
<comment type="interaction">
    <interactant intactId="EBI-723569">
        <id>Q9H773</id>
    </interactant>
    <interactant intactId="EBI-727004">
        <id>O00560</id>
        <label>SDCBP</label>
    </interactant>
    <organismsDiffer>false</organismsDiffer>
    <experiments>3</experiments>
</comment>
<comment type="interaction">
    <interactant intactId="EBI-723569">
        <id>Q9H773</id>
    </interactant>
    <interactant intactId="EBI-742688">
        <id>Q9NZD8</id>
        <label>SPG21</label>
    </interactant>
    <organismsDiffer>false</organismsDiffer>
    <experiments>3</experiments>
</comment>
<comment type="subcellular location">
    <subcellularLocation>
        <location evidence="3">Mitochondrion</location>
    </subcellularLocation>
    <subcellularLocation>
        <location evidence="3">Nucleus</location>
    </subcellularLocation>
    <subcellularLocation>
        <location evidence="3">Cytoplasm</location>
        <location evidence="3">Cytosol</location>
    </subcellularLocation>
</comment>
<comment type="developmental stage">
    <text evidence="3">Expression increases during mitosis (at protein level).</text>
</comment>
<comment type="induction">
    <text evidence="3">Up-regulated by an increase in cellular dCTP pool.</text>
</comment>
<proteinExistence type="evidence at protein level"/>
<name>DCTP1_HUMAN</name>
<sequence>MSVAGGEIRGDTGGEDTAAPGRFSFSPEPTLEDIRRLHAEFAAERDWEQFHQPRNLLLALVGEVGELAELFQWKTDGEPGPQGWSPRERAALQEELSDVLIYLVALAARCRVDLPLAVLSKMDINRRRYPAHLARSSSRKYTELPHGAISEDQAVGPADIPCDSTGQTST</sequence>
<organism>
    <name type="scientific">Homo sapiens</name>
    <name type="common">Human</name>
    <dbReference type="NCBI Taxonomy" id="9606"/>
    <lineage>
        <taxon>Eukaryota</taxon>
        <taxon>Metazoa</taxon>
        <taxon>Chordata</taxon>
        <taxon>Craniata</taxon>
        <taxon>Vertebrata</taxon>
        <taxon>Euteleostomi</taxon>
        <taxon>Mammalia</taxon>
        <taxon>Eutheria</taxon>
        <taxon>Euarchontoglires</taxon>
        <taxon>Primates</taxon>
        <taxon>Haplorrhini</taxon>
        <taxon>Catarrhini</taxon>
        <taxon>Hominidae</taxon>
        <taxon>Homo</taxon>
    </lineage>
</organism>
<accession>Q9H773</accession>
<dbReference type="EC" id="3.6.1.12" evidence="3"/>
<dbReference type="EMBL" id="AY453409">
    <property type="protein sequence ID" value="AAR26724.1"/>
    <property type="molecule type" value="mRNA"/>
</dbReference>
<dbReference type="EMBL" id="AF212242">
    <property type="protein sequence ID" value="AAK14927.1"/>
    <property type="molecule type" value="mRNA"/>
</dbReference>
<dbReference type="EMBL" id="AF210430">
    <property type="protein sequence ID" value="AAK48422.1"/>
    <property type="molecule type" value="mRNA"/>
</dbReference>
<dbReference type="EMBL" id="CR457335">
    <property type="protein sequence ID" value="CAG33616.1"/>
    <property type="molecule type" value="mRNA"/>
</dbReference>
<dbReference type="EMBL" id="AK024843">
    <property type="protein sequence ID" value="BAB15025.1"/>
    <property type="molecule type" value="mRNA"/>
</dbReference>
<dbReference type="EMBL" id="BC001344">
    <property type="protein sequence ID" value="AAH01344.1"/>
    <property type="molecule type" value="mRNA"/>
</dbReference>
<dbReference type="CCDS" id="CCDS10680.1"/>
<dbReference type="RefSeq" id="NP_077001.1">
    <property type="nucleotide sequence ID" value="NM_024096.2"/>
</dbReference>
<dbReference type="PDB" id="7MU5">
    <property type="method" value="X-ray"/>
    <property type="resolution" value="2.20 A"/>
    <property type="chains" value="A/B/C/D/E/F/G/H=21-130"/>
</dbReference>
<dbReference type="PDBsum" id="7MU5"/>
<dbReference type="SMR" id="Q9H773"/>
<dbReference type="BioGRID" id="122527">
    <property type="interactions" value="71"/>
</dbReference>
<dbReference type="FunCoup" id="Q9H773">
    <property type="interactions" value="1835"/>
</dbReference>
<dbReference type="IntAct" id="Q9H773">
    <property type="interactions" value="28"/>
</dbReference>
<dbReference type="MINT" id="Q9H773"/>
<dbReference type="STRING" id="9606.ENSP00000322524"/>
<dbReference type="BindingDB" id="Q9H773"/>
<dbReference type="ChEMBL" id="CHEMBL3769292"/>
<dbReference type="DrugCentral" id="Q9H773"/>
<dbReference type="GlyGen" id="Q9H773">
    <property type="glycosylation" value="1 site, 1 O-linked glycan (1 site)"/>
</dbReference>
<dbReference type="iPTMnet" id="Q9H773"/>
<dbReference type="PhosphoSitePlus" id="Q9H773"/>
<dbReference type="SwissPalm" id="Q9H773"/>
<dbReference type="BioMuta" id="DCTPP1"/>
<dbReference type="DMDM" id="74733624"/>
<dbReference type="jPOST" id="Q9H773"/>
<dbReference type="MassIVE" id="Q9H773"/>
<dbReference type="PaxDb" id="9606-ENSP00000322524"/>
<dbReference type="PeptideAtlas" id="Q9H773"/>
<dbReference type="ProteomicsDB" id="81085"/>
<dbReference type="Pumba" id="Q9H773"/>
<dbReference type="TopDownProteomics" id="Q9H773"/>
<dbReference type="Antibodypedia" id="1233">
    <property type="antibodies" value="127 antibodies from 23 providers"/>
</dbReference>
<dbReference type="DNASU" id="79077"/>
<dbReference type="Ensembl" id="ENST00000319285.5">
    <property type="protein sequence ID" value="ENSP00000322524.4"/>
    <property type="gene ID" value="ENSG00000179958.10"/>
</dbReference>
<dbReference type="GeneID" id="79077"/>
<dbReference type="KEGG" id="hsa:79077"/>
<dbReference type="MANE-Select" id="ENST00000319285.5">
    <property type="protein sequence ID" value="ENSP00000322524.4"/>
    <property type="RefSeq nucleotide sequence ID" value="NM_024096.2"/>
    <property type="RefSeq protein sequence ID" value="NP_077001.1"/>
</dbReference>
<dbReference type="UCSC" id="uc002dyf.4">
    <property type="organism name" value="human"/>
</dbReference>
<dbReference type="AGR" id="HGNC:28777"/>
<dbReference type="CTD" id="79077"/>
<dbReference type="DisGeNET" id="79077"/>
<dbReference type="GeneCards" id="DCTPP1"/>
<dbReference type="HGNC" id="HGNC:28777">
    <property type="gene designation" value="DCTPP1"/>
</dbReference>
<dbReference type="HPA" id="ENSG00000179958">
    <property type="expression patterns" value="Low tissue specificity"/>
</dbReference>
<dbReference type="MIM" id="615840">
    <property type="type" value="gene"/>
</dbReference>
<dbReference type="neXtProt" id="NX_Q9H773"/>
<dbReference type="OpenTargets" id="ENSG00000179958"/>
<dbReference type="PharmGKB" id="PA164718733"/>
<dbReference type="VEuPathDB" id="HostDB:ENSG00000179958"/>
<dbReference type="eggNOG" id="ENOG502S210">
    <property type="taxonomic scope" value="Eukaryota"/>
</dbReference>
<dbReference type="GeneTree" id="ENSGT00390000017709"/>
<dbReference type="HOGENOM" id="CLU_110454_0_1_1"/>
<dbReference type="InParanoid" id="Q9H773"/>
<dbReference type="OMA" id="FRDERNW"/>
<dbReference type="OrthoDB" id="411123at2759"/>
<dbReference type="PAN-GO" id="Q9H773">
    <property type="GO annotations" value="4 GO annotations based on evolutionary models"/>
</dbReference>
<dbReference type="PhylomeDB" id="Q9H773"/>
<dbReference type="TreeFam" id="TF300237"/>
<dbReference type="BRENDA" id="3.6.1.12">
    <property type="organism ID" value="2681"/>
</dbReference>
<dbReference type="PathwayCommons" id="Q9H773"/>
<dbReference type="Reactome" id="R-HSA-499943">
    <property type="pathway name" value="Interconversion of nucleotide di- and triphosphates"/>
</dbReference>
<dbReference type="SignaLink" id="Q9H773"/>
<dbReference type="SIGNOR" id="Q9H773"/>
<dbReference type="BioGRID-ORCS" id="79077">
    <property type="hits" value="8 hits in 1162 CRISPR screens"/>
</dbReference>
<dbReference type="CD-CODE" id="DEE660B4">
    <property type="entry name" value="Stress granule"/>
</dbReference>
<dbReference type="ChiTaRS" id="DCTPP1">
    <property type="organism name" value="human"/>
</dbReference>
<dbReference type="GeneWiki" id="XTP3-transactivated_gene_A_protein"/>
<dbReference type="GenomeRNAi" id="79077"/>
<dbReference type="Pharos" id="Q9H773">
    <property type="development level" value="Tchem"/>
</dbReference>
<dbReference type="PRO" id="PR:Q9H773"/>
<dbReference type="Proteomes" id="UP000005640">
    <property type="component" value="Chromosome 16"/>
</dbReference>
<dbReference type="RNAct" id="Q9H773">
    <property type="molecule type" value="protein"/>
</dbReference>
<dbReference type="Bgee" id="ENSG00000179958">
    <property type="expression patterns" value="Expressed in mucosa of transverse colon and 198 other cell types or tissues"/>
</dbReference>
<dbReference type="ExpressionAtlas" id="Q9H773">
    <property type="expression patterns" value="baseline and differential"/>
</dbReference>
<dbReference type="GO" id="GO:0005829">
    <property type="term" value="C:cytosol"/>
    <property type="evidence" value="ECO:0000314"/>
    <property type="project" value="UniProtKB"/>
</dbReference>
<dbReference type="GO" id="GO:0005739">
    <property type="term" value="C:mitochondrion"/>
    <property type="evidence" value="ECO:0000314"/>
    <property type="project" value="UniProtKB"/>
</dbReference>
<dbReference type="GO" id="GO:0005654">
    <property type="term" value="C:nucleoplasm"/>
    <property type="evidence" value="ECO:0000314"/>
    <property type="project" value="HPA"/>
</dbReference>
<dbReference type="GO" id="GO:0005634">
    <property type="term" value="C:nucleus"/>
    <property type="evidence" value="ECO:0000314"/>
    <property type="project" value="UniProtKB"/>
</dbReference>
<dbReference type="GO" id="GO:0047840">
    <property type="term" value="F:dCTP diphosphatase activity"/>
    <property type="evidence" value="ECO:0000314"/>
    <property type="project" value="UniProtKB"/>
</dbReference>
<dbReference type="GO" id="GO:0042802">
    <property type="term" value="F:identical protein binding"/>
    <property type="evidence" value="ECO:0000353"/>
    <property type="project" value="IntAct"/>
</dbReference>
<dbReference type="GO" id="GO:0000287">
    <property type="term" value="F:magnesium ion binding"/>
    <property type="evidence" value="ECO:0000250"/>
    <property type="project" value="UniProtKB"/>
</dbReference>
<dbReference type="GO" id="GO:0047429">
    <property type="term" value="F:nucleoside triphosphate diphosphatase activity"/>
    <property type="evidence" value="ECO:0000314"/>
    <property type="project" value="UniProtKB"/>
</dbReference>
<dbReference type="GO" id="GO:0032556">
    <property type="term" value="F:pyrimidine deoxyribonucleotide binding"/>
    <property type="evidence" value="ECO:0007669"/>
    <property type="project" value="Ensembl"/>
</dbReference>
<dbReference type="GO" id="GO:0006253">
    <property type="term" value="P:dCTP catabolic process"/>
    <property type="evidence" value="ECO:0000315"/>
    <property type="project" value="UniProtKB"/>
</dbReference>
<dbReference type="GO" id="GO:0042262">
    <property type="term" value="P:DNA protection"/>
    <property type="evidence" value="ECO:0000315"/>
    <property type="project" value="UniProtKB"/>
</dbReference>
<dbReference type="GO" id="GO:0009143">
    <property type="term" value="P:nucleoside triphosphate catabolic process"/>
    <property type="evidence" value="ECO:0000314"/>
    <property type="project" value="UniProtKB"/>
</dbReference>
<dbReference type="CDD" id="cd11537">
    <property type="entry name" value="NTP-PPase_RS21-C6_like"/>
    <property type="match status" value="1"/>
</dbReference>
<dbReference type="FunFam" id="1.10.287.1080:FF:000004">
    <property type="entry name" value="dCTP pyrophosphatase 1"/>
    <property type="match status" value="1"/>
</dbReference>
<dbReference type="Gene3D" id="1.10.287.1080">
    <property type="entry name" value="MazG-like"/>
    <property type="match status" value="1"/>
</dbReference>
<dbReference type="InterPro" id="IPR052555">
    <property type="entry name" value="dCTP_Pyrophosphatase"/>
</dbReference>
<dbReference type="InterPro" id="IPR025984">
    <property type="entry name" value="DCTPP"/>
</dbReference>
<dbReference type="PANTHER" id="PTHR46523">
    <property type="entry name" value="DCTP PYROPHOSPHATASE 1"/>
    <property type="match status" value="1"/>
</dbReference>
<dbReference type="PANTHER" id="PTHR46523:SF1">
    <property type="entry name" value="DCTP PYROPHOSPHATASE 1"/>
    <property type="match status" value="1"/>
</dbReference>
<dbReference type="Pfam" id="PF12643">
    <property type="entry name" value="MazG-like"/>
    <property type="match status" value="1"/>
</dbReference>
<dbReference type="SUPFAM" id="SSF101386">
    <property type="entry name" value="all-alpha NTP pyrophosphatases"/>
    <property type="match status" value="1"/>
</dbReference>
<evidence type="ECO:0000250" key="1">
    <source>
        <dbReference type="UniProtKB" id="Q9QY93"/>
    </source>
</evidence>
<evidence type="ECO:0000256" key="2">
    <source>
        <dbReference type="SAM" id="MobiDB-lite"/>
    </source>
</evidence>
<evidence type="ECO:0000269" key="3">
    <source>
    </source>
</evidence>
<evidence type="ECO:0000305" key="4"/>
<evidence type="ECO:0000312" key="5">
    <source>
        <dbReference type="EMBL" id="AAK14927.1"/>
    </source>
</evidence>
<evidence type="ECO:0000312" key="6">
    <source>
        <dbReference type="EMBL" id="AAK48422.1"/>
    </source>
</evidence>
<evidence type="ECO:0000312" key="7">
    <source>
        <dbReference type="EMBL" id="AAR26724.1"/>
    </source>
</evidence>
<evidence type="ECO:0000312" key="8">
    <source>
        <dbReference type="HGNC" id="HGNC:28777"/>
    </source>
</evidence>
<evidence type="ECO:0007744" key="9">
    <source>
    </source>
</evidence>
<evidence type="ECO:0007744" key="10">
    <source>
    </source>
</evidence>
<evidence type="ECO:0007744" key="11">
    <source>
    </source>
</evidence>
<evidence type="ECO:0007744" key="12">
    <source>
    </source>
</evidence>
<evidence type="ECO:0007829" key="13">
    <source>
        <dbReference type="PDB" id="7MU5"/>
    </source>
</evidence>
<gene>
    <name evidence="8" type="primary">DCTPP1</name>
    <name evidence="7" type="synonym">XTP3TPA</name>
    <name evidence="5" type="ORF">CDA03</name>
</gene>
<reference key="1">
    <citation type="submission" date="2003-10" db="EMBL/GenBank/DDBJ databases">
        <title>Screening and cloning of the target genes transactivated by XTP3 using a suppression subtractive hybridization technique.</title>
        <authorList>
            <person name="Wang C."/>
            <person name="Cheng J."/>
            <person name="Lang Z."/>
            <person name="Wu Y."/>
            <person name="Yang Y."/>
            <person name="Zhang L."/>
            <person name="Ji D."/>
        </authorList>
    </citation>
    <scope>NUCLEOTIDE SEQUENCE [MRNA]</scope>
</reference>
<reference key="2">
    <citation type="submission" date="1999-12" db="EMBL/GenBank/DDBJ databases">
        <title>A novel gene expressed in human pheochromocytoma.</title>
        <authorList>
            <person name="Li Y."/>
            <person name="Huang Q."/>
            <person name="Peng Y."/>
            <person name="Song H."/>
            <person name="Yu Y."/>
            <person name="Xu S."/>
            <person name="Ren S."/>
            <person name="Chen Z."/>
            <person name="Han Z."/>
        </authorList>
    </citation>
    <scope>NUCLEOTIDE SEQUENCE [LARGE SCALE MRNA]</scope>
    <source>
        <tissue>Pheochromocytoma</tissue>
    </source>
</reference>
<reference key="3">
    <citation type="submission" date="1999-12" db="EMBL/GenBank/DDBJ databases">
        <authorList>
            <person name="Zhang J."/>
            <person name="Chen W.F."/>
            <person name="Wang H."/>
        </authorList>
    </citation>
    <scope>NUCLEOTIDE SEQUENCE [LARGE SCALE MRNA]</scope>
</reference>
<reference key="4">
    <citation type="submission" date="2004-06" db="EMBL/GenBank/DDBJ databases">
        <title>Cloning of human full open reading frames in Gateway(TM) system entry vector (pDONR201).</title>
        <authorList>
            <person name="Ebert L."/>
            <person name="Schick M."/>
            <person name="Neubert P."/>
            <person name="Schatten R."/>
            <person name="Henze S."/>
            <person name="Korn B."/>
        </authorList>
    </citation>
    <scope>NUCLEOTIDE SEQUENCE [LARGE SCALE MRNA]</scope>
</reference>
<reference key="5">
    <citation type="journal article" date="2004" name="Nat. Genet.">
        <title>Complete sequencing and characterization of 21,243 full-length human cDNAs.</title>
        <authorList>
            <person name="Ota T."/>
            <person name="Suzuki Y."/>
            <person name="Nishikawa T."/>
            <person name="Otsuki T."/>
            <person name="Sugiyama T."/>
            <person name="Irie R."/>
            <person name="Wakamatsu A."/>
            <person name="Hayashi K."/>
            <person name="Sato H."/>
            <person name="Nagai K."/>
            <person name="Kimura K."/>
            <person name="Makita H."/>
            <person name="Sekine M."/>
            <person name="Obayashi M."/>
            <person name="Nishi T."/>
            <person name="Shibahara T."/>
            <person name="Tanaka T."/>
            <person name="Ishii S."/>
            <person name="Yamamoto J."/>
            <person name="Saito K."/>
            <person name="Kawai Y."/>
            <person name="Isono Y."/>
            <person name="Nakamura Y."/>
            <person name="Nagahari K."/>
            <person name="Murakami K."/>
            <person name="Yasuda T."/>
            <person name="Iwayanagi T."/>
            <person name="Wagatsuma M."/>
            <person name="Shiratori A."/>
            <person name="Sudo H."/>
            <person name="Hosoiri T."/>
            <person name="Kaku Y."/>
            <person name="Kodaira H."/>
            <person name="Kondo H."/>
            <person name="Sugawara M."/>
            <person name="Takahashi M."/>
            <person name="Kanda K."/>
            <person name="Yokoi T."/>
            <person name="Furuya T."/>
            <person name="Kikkawa E."/>
            <person name="Omura Y."/>
            <person name="Abe K."/>
            <person name="Kamihara K."/>
            <person name="Katsuta N."/>
            <person name="Sato K."/>
            <person name="Tanikawa M."/>
            <person name="Yamazaki M."/>
            <person name="Ninomiya K."/>
            <person name="Ishibashi T."/>
            <person name="Yamashita H."/>
            <person name="Murakawa K."/>
            <person name="Fujimori K."/>
            <person name="Tanai H."/>
            <person name="Kimata M."/>
            <person name="Watanabe M."/>
            <person name="Hiraoka S."/>
            <person name="Chiba Y."/>
            <person name="Ishida S."/>
            <person name="Ono Y."/>
            <person name="Takiguchi S."/>
            <person name="Watanabe S."/>
            <person name="Yosida M."/>
            <person name="Hotuta T."/>
            <person name="Kusano J."/>
            <person name="Kanehori K."/>
            <person name="Takahashi-Fujii A."/>
            <person name="Hara H."/>
            <person name="Tanase T.-O."/>
            <person name="Nomura Y."/>
            <person name="Togiya S."/>
            <person name="Komai F."/>
            <person name="Hara R."/>
            <person name="Takeuchi K."/>
            <person name="Arita M."/>
            <person name="Imose N."/>
            <person name="Musashino K."/>
            <person name="Yuuki H."/>
            <person name="Oshima A."/>
            <person name="Sasaki N."/>
            <person name="Aotsuka S."/>
            <person name="Yoshikawa Y."/>
            <person name="Matsunawa H."/>
            <person name="Ichihara T."/>
            <person name="Shiohata N."/>
            <person name="Sano S."/>
            <person name="Moriya S."/>
            <person name="Momiyama H."/>
            <person name="Satoh N."/>
            <person name="Takami S."/>
            <person name="Terashima Y."/>
            <person name="Suzuki O."/>
            <person name="Nakagawa S."/>
            <person name="Senoh A."/>
            <person name="Mizoguchi H."/>
            <person name="Goto Y."/>
            <person name="Shimizu F."/>
            <person name="Wakebe H."/>
            <person name="Hishigaki H."/>
            <person name="Watanabe T."/>
            <person name="Sugiyama A."/>
            <person name="Takemoto M."/>
            <person name="Kawakami B."/>
            <person name="Yamazaki M."/>
            <person name="Watanabe K."/>
            <person name="Kumagai A."/>
            <person name="Itakura S."/>
            <person name="Fukuzumi Y."/>
            <person name="Fujimori Y."/>
            <person name="Komiyama M."/>
            <person name="Tashiro H."/>
            <person name="Tanigami A."/>
            <person name="Fujiwara T."/>
            <person name="Ono T."/>
            <person name="Yamada K."/>
            <person name="Fujii Y."/>
            <person name="Ozaki K."/>
            <person name="Hirao M."/>
            <person name="Ohmori Y."/>
            <person name="Kawabata A."/>
            <person name="Hikiji T."/>
            <person name="Kobatake N."/>
            <person name="Inagaki H."/>
            <person name="Ikema Y."/>
            <person name="Okamoto S."/>
            <person name="Okitani R."/>
            <person name="Kawakami T."/>
            <person name="Noguchi S."/>
            <person name="Itoh T."/>
            <person name="Shigeta K."/>
            <person name="Senba T."/>
            <person name="Matsumura K."/>
            <person name="Nakajima Y."/>
            <person name="Mizuno T."/>
            <person name="Morinaga M."/>
            <person name="Sasaki M."/>
            <person name="Togashi T."/>
            <person name="Oyama M."/>
            <person name="Hata H."/>
            <person name="Watanabe M."/>
            <person name="Komatsu T."/>
            <person name="Mizushima-Sugano J."/>
            <person name="Satoh T."/>
            <person name="Shirai Y."/>
            <person name="Takahashi Y."/>
            <person name="Nakagawa K."/>
            <person name="Okumura K."/>
            <person name="Nagase T."/>
            <person name="Nomura N."/>
            <person name="Kikuchi H."/>
            <person name="Masuho Y."/>
            <person name="Yamashita R."/>
            <person name="Nakai K."/>
            <person name="Yada T."/>
            <person name="Nakamura Y."/>
            <person name="Ohara O."/>
            <person name="Isogai T."/>
            <person name="Sugano S."/>
        </authorList>
    </citation>
    <scope>NUCLEOTIDE SEQUENCE [LARGE SCALE MRNA]</scope>
</reference>
<reference key="6">
    <citation type="journal article" date="2004" name="Genome Res.">
        <title>The status, quality, and expansion of the NIH full-length cDNA project: the Mammalian Gene Collection (MGC).</title>
        <authorList>
            <consortium name="The MGC Project Team"/>
        </authorList>
    </citation>
    <scope>NUCLEOTIDE SEQUENCE [LARGE SCALE MRNA]</scope>
    <source>
        <tissue>Cervix</tissue>
    </source>
</reference>
<reference key="7">
    <citation type="journal article" date="2008" name="Mol. Cell">
        <title>Kinase-selective enrichment enables quantitative phosphoproteomics of the kinome across the cell cycle.</title>
        <authorList>
            <person name="Daub H."/>
            <person name="Olsen J.V."/>
            <person name="Bairlein M."/>
            <person name="Gnad F."/>
            <person name="Oppermann F.S."/>
            <person name="Korner R."/>
            <person name="Greff Z."/>
            <person name="Keri G."/>
            <person name="Stemmann O."/>
            <person name="Mann M."/>
        </authorList>
    </citation>
    <scope>PHOSPHORYLATION [LARGE SCALE ANALYSIS] AT SER-2; THR-12 AND SER-85</scope>
    <scope>IDENTIFICATION BY MASS SPECTROMETRY [LARGE SCALE ANALYSIS]</scope>
    <source>
        <tissue>Cervix carcinoma</tissue>
    </source>
</reference>
<reference key="8">
    <citation type="journal article" date="2008" name="Proc. Natl. Acad. Sci. U.S.A.">
        <title>A quantitative atlas of mitotic phosphorylation.</title>
        <authorList>
            <person name="Dephoure N."/>
            <person name="Zhou C."/>
            <person name="Villen J."/>
            <person name="Beausoleil S.A."/>
            <person name="Bakalarski C.E."/>
            <person name="Elledge S.J."/>
            <person name="Gygi S.P."/>
        </authorList>
    </citation>
    <scope>IDENTIFICATION BY MASS SPECTROMETRY [LARGE SCALE ANALYSIS]</scope>
    <source>
        <tissue>Cervix carcinoma</tissue>
    </source>
</reference>
<reference key="9">
    <citation type="journal article" date="2009" name="Anal. Chem.">
        <title>Lys-N and trypsin cover complementary parts of the phosphoproteome in a refined SCX-based approach.</title>
        <authorList>
            <person name="Gauci S."/>
            <person name="Helbig A.O."/>
            <person name="Slijper M."/>
            <person name="Krijgsveld J."/>
            <person name="Heck A.J."/>
            <person name="Mohammed S."/>
        </authorList>
    </citation>
    <scope>ACETYLATION [LARGE SCALE ANALYSIS] AT SER-2</scope>
    <scope>CLEAVAGE OF INITIATOR METHIONINE [LARGE SCALE ANALYSIS]</scope>
    <scope>IDENTIFICATION BY MASS SPECTROMETRY [LARGE SCALE ANALYSIS]</scope>
</reference>
<reference key="10">
    <citation type="journal article" date="2011" name="BMC Syst. Biol.">
        <title>Initial characterization of the human central proteome.</title>
        <authorList>
            <person name="Burkard T.R."/>
            <person name="Planyavsky M."/>
            <person name="Kaupe I."/>
            <person name="Breitwieser F.P."/>
            <person name="Buerckstuemmer T."/>
            <person name="Bennett K.L."/>
            <person name="Superti-Furga G."/>
            <person name="Colinge J."/>
        </authorList>
    </citation>
    <scope>IDENTIFICATION BY MASS SPECTROMETRY [LARGE SCALE ANALYSIS]</scope>
</reference>
<reference key="11">
    <citation type="journal article" date="2012" name="Proc. Natl. Acad. Sci. U.S.A.">
        <title>N-terminal acetylome analyses and functional insights of the N-terminal acetyltransferase NatB.</title>
        <authorList>
            <person name="Van Damme P."/>
            <person name="Lasa M."/>
            <person name="Polevoda B."/>
            <person name="Gazquez C."/>
            <person name="Elosegui-Artola A."/>
            <person name="Kim D.S."/>
            <person name="De Juan-Pardo E."/>
            <person name="Demeyer K."/>
            <person name="Hole K."/>
            <person name="Larrea E."/>
            <person name="Timmerman E."/>
            <person name="Prieto J."/>
            <person name="Arnesen T."/>
            <person name="Sherman F."/>
            <person name="Gevaert K."/>
            <person name="Aldabe R."/>
        </authorList>
    </citation>
    <scope>ACETYLATION [LARGE SCALE ANALYSIS] AT SER-2</scope>
    <scope>CLEAVAGE OF INITIATOR METHIONINE [LARGE SCALE ANALYSIS]</scope>
    <scope>IDENTIFICATION BY MASS SPECTROMETRY [LARGE SCALE ANALYSIS]</scope>
</reference>
<reference key="12">
    <citation type="journal article" date="2013" name="J. Proteome Res.">
        <title>Toward a comprehensive characterization of a human cancer cell phosphoproteome.</title>
        <authorList>
            <person name="Zhou H."/>
            <person name="Di Palma S."/>
            <person name="Preisinger C."/>
            <person name="Peng M."/>
            <person name="Polat A.N."/>
            <person name="Heck A.J."/>
            <person name="Mohammed S."/>
        </authorList>
    </citation>
    <scope>PHOSPHORYLATION [LARGE SCALE ANALYSIS] AT SER-2 AND SER-85</scope>
    <scope>IDENTIFICATION BY MASS SPECTROMETRY [LARGE SCALE ANALYSIS]</scope>
    <source>
        <tissue>Cervix carcinoma</tissue>
        <tissue>Erythroleukemia</tissue>
    </source>
</reference>
<reference key="13">
    <citation type="journal article" date="2014" name="Biochem. J.">
        <title>The NTP pyrophosphatase DCTPP1 contributes to the homoeostasis and cleansing of the dNTP pool in human cells.</title>
        <authorList>
            <person name="Requena C.E."/>
            <person name="Perez-Moreno G."/>
            <person name="Ruiz-Perez L.M."/>
            <person name="Vidal A.E."/>
            <person name="Gonzalez-Pacanowska D."/>
        </authorList>
    </citation>
    <scope>FUNCTION</scope>
    <scope>CATALYTIC ACTIVITY</scope>
    <scope>ACTIVITY REGULATION</scope>
    <scope>BIOPHYSICOCHEMICAL PROPERTIES</scope>
    <scope>MUTAGENESIS OF GLU-63</scope>
    <scope>INDUCTION BY DCTP</scope>
    <scope>SUBCELLULAR LOCATION</scope>
    <scope>DEVELOPMENTAL STAGE</scope>
</reference>
<reference key="14">
    <citation type="journal article" date="2015" name="Proteomics">
        <title>N-terminome analysis of the human mitochondrial proteome.</title>
        <authorList>
            <person name="Vaca Jacome A.S."/>
            <person name="Rabilloud T."/>
            <person name="Schaeffer-Reiss C."/>
            <person name="Rompais M."/>
            <person name="Ayoub D."/>
            <person name="Lane L."/>
            <person name="Bairoch A."/>
            <person name="Van Dorsselaer A."/>
            <person name="Carapito C."/>
        </authorList>
    </citation>
    <scope>IDENTIFICATION BY MASS SPECTROMETRY [LARGE SCALE ANALYSIS]</scope>
</reference>
<keyword id="KW-0002">3D-structure</keyword>
<keyword id="KW-0007">Acetylation</keyword>
<keyword id="KW-0963">Cytoplasm</keyword>
<keyword id="KW-0378">Hydrolase</keyword>
<keyword id="KW-0460">Magnesium</keyword>
<keyword id="KW-0479">Metal-binding</keyword>
<keyword id="KW-0496">Mitochondrion</keyword>
<keyword id="KW-0547">Nucleotide-binding</keyword>
<keyword id="KW-0539">Nucleus</keyword>
<keyword id="KW-0597">Phosphoprotein</keyword>
<keyword id="KW-1267">Proteomics identification</keyword>
<keyword id="KW-1185">Reference proteome</keyword>
<feature type="initiator methionine" description="Removed" evidence="10 11">
    <location>
        <position position="1"/>
    </location>
</feature>
<feature type="chain" id="PRO_0000291769" description="dCTP pyrophosphatase 1">
    <location>
        <begin position="2"/>
        <end position="170"/>
    </location>
</feature>
<feature type="region of interest" description="Disordered" evidence="2">
    <location>
        <begin position="1"/>
        <end position="27"/>
    </location>
</feature>
<feature type="region of interest" description="Disordered" evidence="2">
    <location>
        <begin position="147"/>
        <end position="170"/>
    </location>
</feature>
<feature type="binding site" evidence="1">
    <location>
        <position position="38"/>
    </location>
    <ligand>
        <name>substrate</name>
    </ligand>
</feature>
<feature type="binding site" evidence="1">
    <location>
        <begin position="47"/>
        <end position="51"/>
    </location>
    <ligand>
        <name>substrate</name>
    </ligand>
</feature>
<feature type="binding site" evidence="1">
    <location>
        <position position="63"/>
    </location>
    <ligand>
        <name>Mg(2+)</name>
        <dbReference type="ChEBI" id="CHEBI:18420"/>
    </ligand>
</feature>
<feature type="binding site" evidence="1">
    <location>
        <position position="66"/>
    </location>
    <ligand>
        <name>Mg(2+)</name>
        <dbReference type="ChEBI" id="CHEBI:18420"/>
    </ligand>
</feature>
<feature type="binding site" evidence="1">
    <location>
        <position position="73"/>
    </location>
    <ligand>
        <name>substrate</name>
    </ligand>
</feature>
<feature type="binding site" evidence="1">
    <location>
        <position position="95"/>
    </location>
    <ligand>
        <name>Mg(2+)</name>
        <dbReference type="ChEBI" id="CHEBI:18420"/>
    </ligand>
</feature>
<feature type="binding site" evidence="1">
    <location>
        <position position="98"/>
    </location>
    <ligand>
        <name>Mg(2+)</name>
        <dbReference type="ChEBI" id="CHEBI:18420"/>
    </ligand>
</feature>
<feature type="binding site" evidence="1">
    <location>
        <position position="102"/>
    </location>
    <ligand>
        <name>substrate</name>
    </ligand>
</feature>
<feature type="modified residue" description="N-acetylserine" evidence="10 11">
    <location>
        <position position="2"/>
    </location>
</feature>
<feature type="modified residue" description="Phosphoserine" evidence="9 12">
    <location>
        <position position="2"/>
    </location>
</feature>
<feature type="modified residue" description="Phosphothreonine" evidence="9">
    <location>
        <position position="12"/>
    </location>
</feature>
<feature type="modified residue" description="Phosphoserine" evidence="9 12">
    <location>
        <position position="85"/>
    </location>
</feature>
<feature type="mutagenesis site" description="Loss of dCTP diphosphatase activity." evidence="3">
    <original>E</original>
    <variation>Q</variation>
    <location>
        <position position="63"/>
    </location>
</feature>
<feature type="helix" evidence="13">
    <location>
        <begin position="31"/>
        <end position="45"/>
    </location>
</feature>
<feature type="helix" evidence="13">
    <location>
        <begin position="48"/>
        <end position="50"/>
    </location>
</feature>
<feature type="helix" evidence="13">
    <location>
        <begin position="53"/>
        <end position="71"/>
    </location>
</feature>
<feature type="helix" evidence="13">
    <location>
        <begin position="81"/>
        <end position="83"/>
    </location>
</feature>
<feature type="helix" evidence="13">
    <location>
        <begin position="86"/>
        <end position="109"/>
    </location>
</feature>
<feature type="helix" evidence="13">
    <location>
        <begin position="114"/>
        <end position="128"/>
    </location>
</feature>